<name>ATPG_ANADF</name>
<feature type="chain" id="PRO_1000053152" description="ATP synthase gamma chain">
    <location>
        <begin position="1"/>
        <end position="290"/>
    </location>
</feature>
<keyword id="KW-0066">ATP synthesis</keyword>
<keyword id="KW-0997">Cell inner membrane</keyword>
<keyword id="KW-1003">Cell membrane</keyword>
<keyword id="KW-0139">CF(1)</keyword>
<keyword id="KW-0375">Hydrogen ion transport</keyword>
<keyword id="KW-0406">Ion transport</keyword>
<keyword id="KW-0472">Membrane</keyword>
<keyword id="KW-1185">Reference proteome</keyword>
<keyword id="KW-0813">Transport</keyword>
<protein>
    <recommendedName>
        <fullName evidence="1">ATP synthase gamma chain</fullName>
    </recommendedName>
    <alternativeName>
        <fullName evidence="1">ATP synthase F1 sector gamma subunit</fullName>
    </alternativeName>
    <alternativeName>
        <fullName evidence="1">F-ATPase gamma subunit</fullName>
    </alternativeName>
</protein>
<dbReference type="EMBL" id="CP000769">
    <property type="protein sequence ID" value="ABS28674.1"/>
    <property type="molecule type" value="Genomic_DNA"/>
</dbReference>
<dbReference type="RefSeq" id="WP_012099324.1">
    <property type="nucleotide sequence ID" value="NC_009675.1"/>
</dbReference>
<dbReference type="SMR" id="A7HIX8"/>
<dbReference type="STRING" id="404589.Anae109_4496"/>
<dbReference type="KEGG" id="afw:Anae109_4496"/>
<dbReference type="eggNOG" id="COG0224">
    <property type="taxonomic scope" value="Bacteria"/>
</dbReference>
<dbReference type="HOGENOM" id="CLU_050669_0_1_7"/>
<dbReference type="OrthoDB" id="9812769at2"/>
<dbReference type="Proteomes" id="UP000006382">
    <property type="component" value="Chromosome"/>
</dbReference>
<dbReference type="GO" id="GO:0005886">
    <property type="term" value="C:plasma membrane"/>
    <property type="evidence" value="ECO:0007669"/>
    <property type="project" value="UniProtKB-SubCell"/>
</dbReference>
<dbReference type="GO" id="GO:0045259">
    <property type="term" value="C:proton-transporting ATP synthase complex"/>
    <property type="evidence" value="ECO:0007669"/>
    <property type="project" value="UniProtKB-KW"/>
</dbReference>
<dbReference type="GO" id="GO:0005524">
    <property type="term" value="F:ATP binding"/>
    <property type="evidence" value="ECO:0007669"/>
    <property type="project" value="UniProtKB-UniRule"/>
</dbReference>
<dbReference type="GO" id="GO:0046933">
    <property type="term" value="F:proton-transporting ATP synthase activity, rotational mechanism"/>
    <property type="evidence" value="ECO:0007669"/>
    <property type="project" value="UniProtKB-UniRule"/>
</dbReference>
<dbReference type="GO" id="GO:0042777">
    <property type="term" value="P:proton motive force-driven plasma membrane ATP synthesis"/>
    <property type="evidence" value="ECO:0007669"/>
    <property type="project" value="UniProtKB-UniRule"/>
</dbReference>
<dbReference type="CDD" id="cd12151">
    <property type="entry name" value="F1-ATPase_gamma"/>
    <property type="match status" value="1"/>
</dbReference>
<dbReference type="FunFam" id="1.10.287.80:FF:000003">
    <property type="entry name" value="ATP synthase gamma chain, chloroplastic"/>
    <property type="match status" value="1"/>
</dbReference>
<dbReference type="Gene3D" id="3.40.1380.10">
    <property type="match status" value="1"/>
</dbReference>
<dbReference type="Gene3D" id="1.10.287.80">
    <property type="entry name" value="ATP synthase, gamma subunit, helix hairpin domain"/>
    <property type="match status" value="2"/>
</dbReference>
<dbReference type="HAMAP" id="MF_00815">
    <property type="entry name" value="ATP_synth_gamma_bact"/>
    <property type="match status" value="1"/>
</dbReference>
<dbReference type="InterPro" id="IPR035968">
    <property type="entry name" value="ATP_synth_F1_ATPase_gsu"/>
</dbReference>
<dbReference type="InterPro" id="IPR000131">
    <property type="entry name" value="ATP_synth_F1_gsu"/>
</dbReference>
<dbReference type="InterPro" id="IPR023632">
    <property type="entry name" value="ATP_synth_F1_gsu_CS"/>
</dbReference>
<dbReference type="NCBIfam" id="TIGR01146">
    <property type="entry name" value="ATPsyn_F1gamma"/>
    <property type="match status" value="1"/>
</dbReference>
<dbReference type="PANTHER" id="PTHR11693">
    <property type="entry name" value="ATP SYNTHASE GAMMA CHAIN"/>
    <property type="match status" value="1"/>
</dbReference>
<dbReference type="PANTHER" id="PTHR11693:SF22">
    <property type="entry name" value="ATP SYNTHASE SUBUNIT GAMMA, MITOCHONDRIAL"/>
    <property type="match status" value="1"/>
</dbReference>
<dbReference type="Pfam" id="PF00231">
    <property type="entry name" value="ATP-synt"/>
    <property type="match status" value="1"/>
</dbReference>
<dbReference type="PRINTS" id="PR00126">
    <property type="entry name" value="ATPASEGAMMA"/>
</dbReference>
<dbReference type="SUPFAM" id="SSF52943">
    <property type="entry name" value="ATP synthase (F1-ATPase), gamma subunit"/>
    <property type="match status" value="1"/>
</dbReference>
<dbReference type="PROSITE" id="PS00153">
    <property type="entry name" value="ATPASE_GAMMA"/>
    <property type="match status" value="1"/>
</dbReference>
<reference key="1">
    <citation type="journal article" date="2015" name="Genome Announc.">
        <title>Complete genome sequence of Anaeromyxobacter sp. Fw109-5, an anaerobic, metal-reducing bacterium isolated from a contaminated subsurface environment.</title>
        <authorList>
            <person name="Hwang C."/>
            <person name="Copeland A."/>
            <person name="Lucas S."/>
            <person name="Lapidus A."/>
            <person name="Barry K."/>
            <person name="Glavina Del Rio T."/>
            <person name="Dalin E."/>
            <person name="Tice H."/>
            <person name="Pitluck S."/>
            <person name="Sims D."/>
            <person name="Brettin T."/>
            <person name="Bruce D.C."/>
            <person name="Detter J.C."/>
            <person name="Han C.S."/>
            <person name="Schmutz J."/>
            <person name="Larimer F.W."/>
            <person name="Land M.L."/>
            <person name="Hauser L.J."/>
            <person name="Kyrpides N."/>
            <person name="Lykidis A."/>
            <person name="Richardson P."/>
            <person name="Belieav A."/>
            <person name="Sanford R.A."/>
            <person name="Loeffler F.E."/>
            <person name="Fields M.W."/>
        </authorList>
    </citation>
    <scope>NUCLEOTIDE SEQUENCE [LARGE SCALE GENOMIC DNA]</scope>
    <source>
        <strain>Fw109-5</strain>
    </source>
</reference>
<sequence length="290" mass="32377">MPSLRDIRNRIGSVKSTRQITKAMKMVSAAKLRRAQDAILKTRPYAQLLEQTLGRIAARAAADEVVAHPLLAPRAQRTAEVVVITSDRGLAGGFNANIARRTQRFLVENADRYERVQLATIGRKGRDYFRARRLEIRKDFTGVHANLAYEKAEAIAAEYTERYLSGEVDAVFLAYNEFKSAISQKPVVFQLLPIETPPDAGDGASIDFKYEPSREALLRDLLPRHVAMQVWRALLESAASEHGARMSAMESATKNAEEMIASLTLQYNRARQAYVTKELMEIVSGAEALK</sequence>
<gene>
    <name evidence="1" type="primary">atpG</name>
    <name type="ordered locus">Anae109_4496</name>
</gene>
<evidence type="ECO:0000255" key="1">
    <source>
        <dbReference type="HAMAP-Rule" id="MF_00815"/>
    </source>
</evidence>
<proteinExistence type="inferred from homology"/>
<organism>
    <name type="scientific">Anaeromyxobacter sp. (strain Fw109-5)</name>
    <dbReference type="NCBI Taxonomy" id="404589"/>
    <lineage>
        <taxon>Bacteria</taxon>
        <taxon>Pseudomonadati</taxon>
        <taxon>Myxococcota</taxon>
        <taxon>Myxococcia</taxon>
        <taxon>Myxococcales</taxon>
        <taxon>Cystobacterineae</taxon>
        <taxon>Anaeromyxobacteraceae</taxon>
        <taxon>Anaeromyxobacter</taxon>
    </lineage>
</organism>
<comment type="function">
    <text evidence="1">Produces ATP from ADP in the presence of a proton gradient across the membrane. The gamma chain is believed to be important in regulating ATPase activity and the flow of protons through the CF(0) complex.</text>
</comment>
<comment type="subunit">
    <text evidence="1">F-type ATPases have 2 components, CF(1) - the catalytic core - and CF(0) - the membrane proton channel. CF(1) has five subunits: alpha(3), beta(3), gamma(1), delta(1), epsilon(1). CF(0) has three main subunits: a, b and c.</text>
</comment>
<comment type="subcellular location">
    <subcellularLocation>
        <location evidence="1">Cell inner membrane</location>
        <topology evidence="1">Peripheral membrane protein</topology>
    </subcellularLocation>
</comment>
<comment type="similarity">
    <text evidence="1">Belongs to the ATPase gamma chain family.</text>
</comment>
<accession>A7HIX8</accession>